<comment type="function">
    <text evidence="1">Catalyzes the oxidation of either pyridoxine 5'-phosphate (PNP) or pyridoxamine 5'-phosphate (PMP) into pyridoxal 5'-phosphate (PLP).</text>
</comment>
<comment type="catalytic activity">
    <reaction evidence="1">
        <text>pyridoxamine 5'-phosphate + O2 + H2O = pyridoxal 5'-phosphate + H2O2 + NH4(+)</text>
        <dbReference type="Rhea" id="RHEA:15817"/>
        <dbReference type="ChEBI" id="CHEBI:15377"/>
        <dbReference type="ChEBI" id="CHEBI:15379"/>
        <dbReference type="ChEBI" id="CHEBI:16240"/>
        <dbReference type="ChEBI" id="CHEBI:28938"/>
        <dbReference type="ChEBI" id="CHEBI:58451"/>
        <dbReference type="ChEBI" id="CHEBI:597326"/>
        <dbReference type="EC" id="1.4.3.5"/>
    </reaction>
</comment>
<comment type="catalytic activity">
    <reaction evidence="1">
        <text>pyridoxine 5'-phosphate + O2 = pyridoxal 5'-phosphate + H2O2</text>
        <dbReference type="Rhea" id="RHEA:15149"/>
        <dbReference type="ChEBI" id="CHEBI:15379"/>
        <dbReference type="ChEBI" id="CHEBI:16240"/>
        <dbReference type="ChEBI" id="CHEBI:58589"/>
        <dbReference type="ChEBI" id="CHEBI:597326"/>
        <dbReference type="EC" id="1.4.3.5"/>
    </reaction>
</comment>
<comment type="cofactor">
    <cofactor evidence="1">
        <name>FMN</name>
        <dbReference type="ChEBI" id="CHEBI:58210"/>
    </cofactor>
    <text evidence="1">Binds 1 FMN per subunit.</text>
</comment>
<comment type="pathway">
    <text evidence="1">Cofactor metabolism; pyridoxal 5'-phosphate salvage; pyridoxal 5'-phosphate from pyridoxamine 5'-phosphate: step 1/1.</text>
</comment>
<comment type="pathway">
    <text evidence="1">Cofactor metabolism; pyridoxal 5'-phosphate salvage; pyridoxal 5'-phosphate from pyridoxine 5'-phosphate: step 1/1.</text>
</comment>
<comment type="subunit">
    <text evidence="1">Homodimer.</text>
</comment>
<comment type="similarity">
    <text evidence="1">Belongs to the pyridoxamine 5'-phosphate oxidase family.</text>
</comment>
<comment type="sequence caution" evidence="2">
    <conflict type="erroneous initiation">
        <sequence resource="EMBL-CDS" id="BAA18303"/>
    </conflict>
</comment>
<reference key="1">
    <citation type="journal article" date="1996" name="DNA Res.">
        <title>Sequence analysis of the genome of the unicellular cyanobacterium Synechocystis sp. strain PCC6803. II. Sequence determination of the entire genome and assignment of potential protein-coding regions.</title>
        <authorList>
            <person name="Kaneko T."/>
            <person name="Sato S."/>
            <person name="Kotani H."/>
            <person name="Tanaka A."/>
            <person name="Asamizu E."/>
            <person name="Nakamura Y."/>
            <person name="Miyajima N."/>
            <person name="Hirosawa M."/>
            <person name="Sugiura M."/>
            <person name="Sasamoto S."/>
            <person name="Kimura T."/>
            <person name="Hosouchi T."/>
            <person name="Matsuno A."/>
            <person name="Muraki A."/>
            <person name="Nakazaki N."/>
            <person name="Naruo K."/>
            <person name="Okumura S."/>
            <person name="Shimpo S."/>
            <person name="Takeuchi C."/>
            <person name="Wada T."/>
            <person name="Watanabe A."/>
            <person name="Yamada M."/>
            <person name="Yasuda M."/>
            <person name="Tabata S."/>
        </authorList>
    </citation>
    <scope>NUCLEOTIDE SEQUENCE [LARGE SCALE GENOMIC DNA]</scope>
    <source>
        <strain>ATCC 27184 / PCC 6803 / Kazusa</strain>
    </source>
</reference>
<reference key="2">
    <citation type="journal article" date="1994" name="Plant Mol. Biol.">
        <title>Cloning of omega 3 desaturase from cyanobacteria and its use in altering the degree of membrane-lipid unsaturation.</title>
        <authorList>
            <person name="Sakamoto T."/>
            <person name="Los D.A."/>
            <person name="Higashi S."/>
            <person name="Wada H."/>
            <person name="Nishida I."/>
            <person name="Ohmori M."/>
            <person name="Murata N."/>
        </authorList>
    </citation>
    <scope>NUCLEOTIDE SEQUENCE [GENOMIC DNA] OF 178-214</scope>
</reference>
<name>PDXH_SYNY3</name>
<accession>P74211</accession>
<accession>Q55239</accession>
<feature type="chain" id="PRO_0000167763" description="Pyridoxine/pyridoxamine 5'-phosphate oxidase">
    <location>
        <begin position="1"/>
        <end position="214"/>
    </location>
</feature>
<feature type="binding site" evidence="1">
    <location>
        <begin position="10"/>
        <end position="13"/>
    </location>
    <ligand>
        <name>substrate</name>
    </ligand>
</feature>
<feature type="binding site" evidence="1">
    <location>
        <begin position="63"/>
        <end position="68"/>
    </location>
    <ligand>
        <name>FMN</name>
        <dbReference type="ChEBI" id="CHEBI:58210"/>
    </ligand>
</feature>
<feature type="binding site" evidence="1">
    <location>
        <position position="68"/>
    </location>
    <ligand>
        <name>substrate</name>
    </ligand>
</feature>
<feature type="binding site" evidence="1">
    <location>
        <begin position="78"/>
        <end position="79"/>
    </location>
    <ligand>
        <name>FMN</name>
        <dbReference type="ChEBI" id="CHEBI:58210"/>
    </ligand>
</feature>
<feature type="binding site" evidence="1">
    <location>
        <position position="85"/>
    </location>
    <ligand>
        <name>FMN</name>
        <dbReference type="ChEBI" id="CHEBI:58210"/>
    </ligand>
</feature>
<feature type="binding site" evidence="1">
    <location>
        <position position="107"/>
    </location>
    <ligand>
        <name>FMN</name>
        <dbReference type="ChEBI" id="CHEBI:58210"/>
    </ligand>
</feature>
<feature type="binding site" evidence="1">
    <location>
        <position position="125"/>
    </location>
    <ligand>
        <name>substrate</name>
    </ligand>
</feature>
<feature type="binding site" evidence="1">
    <location>
        <position position="129"/>
    </location>
    <ligand>
        <name>substrate</name>
    </ligand>
</feature>
<feature type="binding site" evidence="1">
    <location>
        <position position="133"/>
    </location>
    <ligand>
        <name>substrate</name>
    </ligand>
</feature>
<feature type="binding site" evidence="1">
    <location>
        <begin position="142"/>
        <end position="143"/>
    </location>
    <ligand>
        <name>FMN</name>
        <dbReference type="ChEBI" id="CHEBI:58210"/>
    </ligand>
</feature>
<feature type="binding site" evidence="1">
    <location>
        <position position="187"/>
    </location>
    <ligand>
        <name>FMN</name>
        <dbReference type="ChEBI" id="CHEBI:58210"/>
    </ligand>
</feature>
<feature type="binding site" evidence="1">
    <location>
        <begin position="193"/>
        <end position="195"/>
    </location>
    <ligand>
        <name>substrate</name>
    </ligand>
</feature>
<feature type="binding site" evidence="1">
    <location>
        <position position="197"/>
    </location>
    <ligand>
        <name>FMN</name>
        <dbReference type="ChEBI" id="CHEBI:58210"/>
    </ligand>
</feature>
<keyword id="KW-0285">Flavoprotein</keyword>
<keyword id="KW-0288">FMN</keyword>
<keyword id="KW-0560">Oxidoreductase</keyword>
<keyword id="KW-0664">Pyridoxine biosynthesis</keyword>
<keyword id="KW-1185">Reference proteome</keyword>
<sequence>MDGVSLADLRLNYTQGGLIEAEVADHPFAQFHIWLQQAIAAELPEPNAMTLSTLSEEGHPVGRMVLLKGLDERGFVFYTNYDSAKGQQLTAHPWAGLVFWWAALERQVRVDGQVEKIDPAESDAYFQSRPRGSQLGAWASPQSRIVGDRQELEDNLARWEKQYENQSIPRPPHWGGFRVIPHRIEFWQGRPSRLHDRLQFNLLDGQWHRQRLAP</sequence>
<organism>
    <name type="scientific">Synechocystis sp. (strain ATCC 27184 / PCC 6803 / Kazusa)</name>
    <dbReference type="NCBI Taxonomy" id="1111708"/>
    <lineage>
        <taxon>Bacteria</taxon>
        <taxon>Bacillati</taxon>
        <taxon>Cyanobacteriota</taxon>
        <taxon>Cyanophyceae</taxon>
        <taxon>Synechococcales</taxon>
        <taxon>Merismopediaceae</taxon>
        <taxon>Synechocystis</taxon>
    </lineage>
</organism>
<evidence type="ECO:0000255" key="1">
    <source>
        <dbReference type="HAMAP-Rule" id="MF_01629"/>
    </source>
</evidence>
<evidence type="ECO:0000305" key="2"/>
<gene>
    <name evidence="1" type="primary">pdxH</name>
    <name type="synonym">fprA</name>
    <name type="ordered locus">sll1440</name>
</gene>
<dbReference type="EC" id="1.4.3.5" evidence="1"/>
<dbReference type="EMBL" id="BA000022">
    <property type="protein sequence ID" value="BAA18303.1"/>
    <property type="status" value="ALT_INIT"/>
    <property type="molecule type" value="Genomic_DNA"/>
</dbReference>
<dbReference type="EMBL" id="D13780">
    <property type="protein sequence ID" value="BAA02923.1"/>
    <property type="molecule type" value="Genomic_DNA"/>
</dbReference>
<dbReference type="PIR" id="S75844">
    <property type="entry name" value="S75844"/>
</dbReference>
<dbReference type="SMR" id="P74211"/>
<dbReference type="IntAct" id="P74211">
    <property type="interactions" value="3"/>
</dbReference>
<dbReference type="STRING" id="1148.gene:10499179"/>
<dbReference type="PaxDb" id="1148-1653389"/>
<dbReference type="EnsemblBacteria" id="BAA18303">
    <property type="protein sequence ID" value="BAA18303"/>
    <property type="gene ID" value="BAA18303"/>
</dbReference>
<dbReference type="KEGG" id="syn:sll1440"/>
<dbReference type="eggNOG" id="COG0259">
    <property type="taxonomic scope" value="Bacteria"/>
</dbReference>
<dbReference type="InParanoid" id="P74211"/>
<dbReference type="PhylomeDB" id="P74211"/>
<dbReference type="UniPathway" id="UPA01068">
    <property type="reaction ID" value="UER00304"/>
</dbReference>
<dbReference type="UniPathway" id="UPA01068">
    <property type="reaction ID" value="UER00305"/>
</dbReference>
<dbReference type="Proteomes" id="UP000001425">
    <property type="component" value="Chromosome"/>
</dbReference>
<dbReference type="GO" id="GO:0010181">
    <property type="term" value="F:FMN binding"/>
    <property type="evidence" value="ECO:0007669"/>
    <property type="project" value="UniProtKB-UniRule"/>
</dbReference>
<dbReference type="GO" id="GO:0004733">
    <property type="term" value="F:pyridoxamine phosphate oxidase activity"/>
    <property type="evidence" value="ECO:0000318"/>
    <property type="project" value="GO_Central"/>
</dbReference>
<dbReference type="GO" id="GO:0042823">
    <property type="term" value="P:pyridoxal phosphate biosynthetic process"/>
    <property type="evidence" value="ECO:0000318"/>
    <property type="project" value="GO_Central"/>
</dbReference>
<dbReference type="GO" id="GO:0008615">
    <property type="term" value="P:pyridoxine biosynthetic process"/>
    <property type="evidence" value="ECO:0007669"/>
    <property type="project" value="UniProtKB-KW"/>
</dbReference>
<dbReference type="FunFam" id="2.30.110.10:FF:000020">
    <property type="entry name" value="PNPO isoform 11"/>
    <property type="match status" value="1"/>
</dbReference>
<dbReference type="Gene3D" id="2.30.110.10">
    <property type="entry name" value="Electron Transport, Fmn-binding Protein, Chain A"/>
    <property type="match status" value="1"/>
</dbReference>
<dbReference type="HAMAP" id="MF_01629">
    <property type="entry name" value="PdxH"/>
    <property type="match status" value="1"/>
</dbReference>
<dbReference type="InterPro" id="IPR000659">
    <property type="entry name" value="Pyridox_Oxase"/>
</dbReference>
<dbReference type="InterPro" id="IPR019740">
    <property type="entry name" value="Pyridox_Oxase_CS"/>
</dbReference>
<dbReference type="InterPro" id="IPR011576">
    <property type="entry name" value="Pyridox_Oxase_N"/>
</dbReference>
<dbReference type="InterPro" id="IPR019576">
    <property type="entry name" value="Pyridoxamine_oxidase_dimer_C"/>
</dbReference>
<dbReference type="InterPro" id="IPR012349">
    <property type="entry name" value="Split_barrel_FMN-bd"/>
</dbReference>
<dbReference type="NCBIfam" id="TIGR00558">
    <property type="entry name" value="pdxH"/>
    <property type="match status" value="1"/>
</dbReference>
<dbReference type="NCBIfam" id="NF004231">
    <property type="entry name" value="PRK05679.1"/>
    <property type="match status" value="1"/>
</dbReference>
<dbReference type="PANTHER" id="PTHR10851:SF0">
    <property type="entry name" value="PYRIDOXINE-5'-PHOSPHATE OXIDASE"/>
    <property type="match status" value="1"/>
</dbReference>
<dbReference type="PANTHER" id="PTHR10851">
    <property type="entry name" value="PYRIDOXINE-5-PHOSPHATE OXIDASE"/>
    <property type="match status" value="1"/>
</dbReference>
<dbReference type="Pfam" id="PF10590">
    <property type="entry name" value="PNP_phzG_C"/>
    <property type="match status" value="1"/>
</dbReference>
<dbReference type="Pfam" id="PF01243">
    <property type="entry name" value="PNPOx_N"/>
    <property type="match status" value="1"/>
</dbReference>
<dbReference type="PIRSF" id="PIRSF000190">
    <property type="entry name" value="Pyd_amn-ph_oxd"/>
    <property type="match status" value="1"/>
</dbReference>
<dbReference type="SUPFAM" id="SSF50475">
    <property type="entry name" value="FMN-binding split barrel"/>
    <property type="match status" value="1"/>
</dbReference>
<dbReference type="PROSITE" id="PS01064">
    <property type="entry name" value="PYRIDOX_OXIDASE"/>
    <property type="match status" value="1"/>
</dbReference>
<protein>
    <recommendedName>
        <fullName evidence="1">Pyridoxine/pyridoxamine 5'-phosphate oxidase</fullName>
        <ecNumber evidence="1">1.4.3.5</ecNumber>
    </recommendedName>
    <alternativeName>
        <fullName evidence="1">PNP/PMP oxidase</fullName>
        <shortName evidence="1">PNPOx</shortName>
    </alternativeName>
    <alternativeName>
        <fullName evidence="1">Pyridoxal 5'-phosphate synthase</fullName>
    </alternativeName>
</protein>
<proteinExistence type="inferred from homology"/>